<accession>B9JY62</accession>
<evidence type="ECO:0000255" key="1">
    <source>
        <dbReference type="HAMAP-Rule" id="MF_01007"/>
    </source>
</evidence>
<reference key="1">
    <citation type="journal article" date="2009" name="J. Bacteriol.">
        <title>Genome sequences of three Agrobacterium biovars help elucidate the evolution of multichromosome genomes in bacteria.</title>
        <authorList>
            <person name="Slater S.C."/>
            <person name="Goldman B.S."/>
            <person name="Goodner B."/>
            <person name="Setubal J.C."/>
            <person name="Farrand S.K."/>
            <person name="Nester E.W."/>
            <person name="Burr T.J."/>
            <person name="Banta L."/>
            <person name="Dickerman A.W."/>
            <person name="Paulsen I."/>
            <person name="Otten L."/>
            <person name="Suen G."/>
            <person name="Welch R."/>
            <person name="Almeida N.F."/>
            <person name="Arnold F."/>
            <person name="Burton O.T."/>
            <person name="Du Z."/>
            <person name="Ewing A."/>
            <person name="Godsy E."/>
            <person name="Heisel S."/>
            <person name="Houmiel K.L."/>
            <person name="Jhaveri J."/>
            <person name="Lu J."/>
            <person name="Miller N.M."/>
            <person name="Norton S."/>
            <person name="Chen Q."/>
            <person name="Phoolcharoen W."/>
            <person name="Ohlin V."/>
            <person name="Ondrusek D."/>
            <person name="Pride N."/>
            <person name="Stricklin S.L."/>
            <person name="Sun J."/>
            <person name="Wheeler C."/>
            <person name="Wilson L."/>
            <person name="Zhu H."/>
            <person name="Wood D.W."/>
        </authorList>
    </citation>
    <scope>NUCLEOTIDE SEQUENCE [LARGE SCALE GENOMIC DNA]</scope>
    <source>
        <strain>ATCC BAA-846 / DSM 112012 / S4</strain>
    </source>
</reference>
<name>RSMH_ALLAM</name>
<sequence length="341" mass="36607">MVTDLGGGYAEAEGGPVRHIPVLLEPVIEALEPSAGKVILDGTFGAGGYTSAILDTGADVIALDRDPNAIAGGQAMVAARAGRLTLHHTRFSTLDNFAPEGGLDGIVLDIGVSSMQIDEAERGFSFQRNGPLDMRMSGTGVSAADVVNRAKVGDLIRIFGFLGEEKQSGRIARAIEKRRVNHPFQTTRDLAGMIEIVTPRKAKDKIHPATRVFQALRVFVNDELGELAEALFAAERALKPGGRLVVVTFHSLEDRIVKKFFSDRSGKAAGSRHMPMAFERPATFEPVGKGMVTATEEEAEINPRARSAKLRAGIRTAHPAMKADFSIFDLPDLAEIERLGA</sequence>
<proteinExistence type="inferred from homology"/>
<protein>
    <recommendedName>
        <fullName evidence="1">Ribosomal RNA small subunit methyltransferase H</fullName>
        <ecNumber evidence="1">2.1.1.199</ecNumber>
    </recommendedName>
    <alternativeName>
        <fullName evidence="1">16S rRNA m(4)C1402 methyltransferase</fullName>
    </alternativeName>
    <alternativeName>
        <fullName evidence="1">rRNA (cytosine-N(4)-)-methyltransferase RsmH</fullName>
    </alternativeName>
</protein>
<feature type="chain" id="PRO_0000386702" description="Ribosomal RNA small subunit methyltransferase H">
    <location>
        <begin position="1"/>
        <end position="341"/>
    </location>
</feature>
<feature type="binding site" evidence="1">
    <location>
        <begin position="47"/>
        <end position="49"/>
    </location>
    <ligand>
        <name>S-adenosyl-L-methionine</name>
        <dbReference type="ChEBI" id="CHEBI:59789"/>
    </ligand>
</feature>
<feature type="binding site" evidence="1">
    <location>
        <position position="64"/>
    </location>
    <ligand>
        <name>S-adenosyl-L-methionine</name>
        <dbReference type="ChEBI" id="CHEBI:59789"/>
    </ligand>
</feature>
<feature type="binding site" evidence="1">
    <location>
        <position position="97"/>
    </location>
    <ligand>
        <name>S-adenosyl-L-methionine</name>
        <dbReference type="ChEBI" id="CHEBI:59789"/>
    </ligand>
</feature>
<feature type="binding site" evidence="1">
    <location>
        <position position="109"/>
    </location>
    <ligand>
        <name>S-adenosyl-L-methionine</name>
        <dbReference type="ChEBI" id="CHEBI:59789"/>
    </ligand>
</feature>
<feature type="binding site" evidence="1">
    <location>
        <position position="116"/>
    </location>
    <ligand>
        <name>S-adenosyl-L-methionine</name>
        <dbReference type="ChEBI" id="CHEBI:59789"/>
    </ligand>
</feature>
<gene>
    <name evidence="1" type="primary">rsmH</name>
    <name type="synonym">mraW</name>
    <name type="ordered locus">Avi_2900</name>
</gene>
<keyword id="KW-0963">Cytoplasm</keyword>
<keyword id="KW-0489">Methyltransferase</keyword>
<keyword id="KW-1185">Reference proteome</keyword>
<keyword id="KW-0698">rRNA processing</keyword>
<keyword id="KW-0949">S-adenosyl-L-methionine</keyword>
<keyword id="KW-0808">Transferase</keyword>
<dbReference type="EC" id="2.1.1.199" evidence="1"/>
<dbReference type="EMBL" id="CP000633">
    <property type="protein sequence ID" value="ACM37093.1"/>
    <property type="molecule type" value="Genomic_DNA"/>
</dbReference>
<dbReference type="RefSeq" id="WP_015916514.1">
    <property type="nucleotide sequence ID" value="NC_011989.1"/>
</dbReference>
<dbReference type="SMR" id="B9JY62"/>
<dbReference type="STRING" id="311402.Avi_2900"/>
<dbReference type="KEGG" id="avi:Avi_2900"/>
<dbReference type="eggNOG" id="COG0275">
    <property type="taxonomic scope" value="Bacteria"/>
</dbReference>
<dbReference type="HOGENOM" id="CLU_038422_1_1_5"/>
<dbReference type="Proteomes" id="UP000001596">
    <property type="component" value="Chromosome 1"/>
</dbReference>
<dbReference type="GO" id="GO:0005737">
    <property type="term" value="C:cytoplasm"/>
    <property type="evidence" value="ECO:0007669"/>
    <property type="project" value="UniProtKB-SubCell"/>
</dbReference>
<dbReference type="GO" id="GO:0071424">
    <property type="term" value="F:rRNA (cytosine-N4-)-methyltransferase activity"/>
    <property type="evidence" value="ECO:0007669"/>
    <property type="project" value="UniProtKB-UniRule"/>
</dbReference>
<dbReference type="GO" id="GO:0070475">
    <property type="term" value="P:rRNA base methylation"/>
    <property type="evidence" value="ECO:0007669"/>
    <property type="project" value="UniProtKB-UniRule"/>
</dbReference>
<dbReference type="Gene3D" id="1.10.150.170">
    <property type="entry name" value="Putative methyltransferase TM0872, insert domain"/>
    <property type="match status" value="1"/>
</dbReference>
<dbReference type="Gene3D" id="3.40.50.150">
    <property type="entry name" value="Vaccinia Virus protein VP39"/>
    <property type="match status" value="1"/>
</dbReference>
<dbReference type="HAMAP" id="MF_01007">
    <property type="entry name" value="16SrRNA_methyltr_H"/>
    <property type="match status" value="1"/>
</dbReference>
<dbReference type="InterPro" id="IPR002903">
    <property type="entry name" value="RsmH"/>
</dbReference>
<dbReference type="InterPro" id="IPR023397">
    <property type="entry name" value="SAM-dep_MeTrfase_MraW_recog"/>
</dbReference>
<dbReference type="InterPro" id="IPR029063">
    <property type="entry name" value="SAM-dependent_MTases_sf"/>
</dbReference>
<dbReference type="NCBIfam" id="TIGR00006">
    <property type="entry name" value="16S rRNA (cytosine(1402)-N(4))-methyltransferase RsmH"/>
    <property type="match status" value="1"/>
</dbReference>
<dbReference type="PANTHER" id="PTHR11265:SF0">
    <property type="entry name" value="12S RRNA N4-METHYLCYTIDINE METHYLTRANSFERASE"/>
    <property type="match status" value="1"/>
</dbReference>
<dbReference type="PANTHER" id="PTHR11265">
    <property type="entry name" value="S-ADENOSYL-METHYLTRANSFERASE MRAW"/>
    <property type="match status" value="1"/>
</dbReference>
<dbReference type="Pfam" id="PF01795">
    <property type="entry name" value="Methyltransf_5"/>
    <property type="match status" value="1"/>
</dbReference>
<dbReference type="PIRSF" id="PIRSF004486">
    <property type="entry name" value="MraW"/>
    <property type="match status" value="1"/>
</dbReference>
<dbReference type="SUPFAM" id="SSF81799">
    <property type="entry name" value="Putative methyltransferase TM0872, insert domain"/>
    <property type="match status" value="1"/>
</dbReference>
<dbReference type="SUPFAM" id="SSF53335">
    <property type="entry name" value="S-adenosyl-L-methionine-dependent methyltransferases"/>
    <property type="match status" value="1"/>
</dbReference>
<organism>
    <name type="scientific">Allorhizobium ampelinum (strain ATCC BAA-846 / DSM 112012 / S4)</name>
    <name type="common">Agrobacterium vitis (strain S4)</name>
    <dbReference type="NCBI Taxonomy" id="311402"/>
    <lineage>
        <taxon>Bacteria</taxon>
        <taxon>Pseudomonadati</taxon>
        <taxon>Pseudomonadota</taxon>
        <taxon>Alphaproteobacteria</taxon>
        <taxon>Hyphomicrobiales</taxon>
        <taxon>Rhizobiaceae</taxon>
        <taxon>Rhizobium/Agrobacterium group</taxon>
        <taxon>Allorhizobium</taxon>
        <taxon>Allorhizobium ampelinum</taxon>
    </lineage>
</organism>
<comment type="function">
    <text evidence="1">Specifically methylates the N4 position of cytidine in position 1402 (C1402) of 16S rRNA.</text>
</comment>
<comment type="catalytic activity">
    <reaction evidence="1">
        <text>cytidine(1402) in 16S rRNA + S-adenosyl-L-methionine = N(4)-methylcytidine(1402) in 16S rRNA + S-adenosyl-L-homocysteine + H(+)</text>
        <dbReference type="Rhea" id="RHEA:42928"/>
        <dbReference type="Rhea" id="RHEA-COMP:10286"/>
        <dbReference type="Rhea" id="RHEA-COMP:10287"/>
        <dbReference type="ChEBI" id="CHEBI:15378"/>
        <dbReference type="ChEBI" id="CHEBI:57856"/>
        <dbReference type="ChEBI" id="CHEBI:59789"/>
        <dbReference type="ChEBI" id="CHEBI:74506"/>
        <dbReference type="ChEBI" id="CHEBI:82748"/>
        <dbReference type="EC" id="2.1.1.199"/>
    </reaction>
</comment>
<comment type="subcellular location">
    <subcellularLocation>
        <location evidence="1">Cytoplasm</location>
    </subcellularLocation>
</comment>
<comment type="similarity">
    <text evidence="1">Belongs to the methyltransferase superfamily. RsmH family.</text>
</comment>